<name>SOTB_MANSM</name>
<reference key="1">
    <citation type="journal article" date="2004" name="Nat. Biotechnol.">
        <title>The genome sequence of the capnophilic rumen bacterium Mannheimia succiniciproducens.</title>
        <authorList>
            <person name="Hong S.H."/>
            <person name="Kim J.S."/>
            <person name="Lee S.Y."/>
            <person name="In Y.H."/>
            <person name="Choi S.S."/>
            <person name="Rih J.-K."/>
            <person name="Kim C.H."/>
            <person name="Jeong H."/>
            <person name="Hur C.G."/>
            <person name="Kim J.J."/>
        </authorList>
    </citation>
    <scope>NUCLEOTIDE SEQUENCE [LARGE SCALE GENOMIC DNA]</scope>
    <source>
        <strain>KCTC 0769BP / MBEL55E</strain>
    </source>
</reference>
<feature type="chain" id="PRO_0000259252" description="Probable sugar efflux transporter">
    <location>
        <begin position="1"/>
        <end position="397"/>
    </location>
</feature>
<feature type="transmembrane region" description="Helical" evidence="1">
    <location>
        <begin position="15"/>
        <end position="35"/>
    </location>
</feature>
<feature type="transmembrane region" description="Helical" evidence="1">
    <location>
        <begin position="51"/>
        <end position="71"/>
    </location>
</feature>
<feature type="transmembrane region" description="Helical" evidence="1">
    <location>
        <begin position="80"/>
        <end position="100"/>
    </location>
</feature>
<feature type="transmembrane region" description="Helical" evidence="1">
    <location>
        <begin position="103"/>
        <end position="123"/>
    </location>
</feature>
<feature type="transmembrane region" description="Helical" evidence="1">
    <location>
        <begin position="137"/>
        <end position="157"/>
    </location>
</feature>
<feature type="transmembrane region" description="Helical" evidence="1">
    <location>
        <begin position="169"/>
        <end position="189"/>
    </location>
</feature>
<feature type="transmembrane region" description="Helical" evidence="1">
    <location>
        <begin position="209"/>
        <end position="229"/>
    </location>
</feature>
<feature type="transmembrane region" description="Helical" evidence="1">
    <location>
        <begin position="246"/>
        <end position="266"/>
    </location>
</feature>
<feature type="transmembrane region" description="Helical" evidence="1">
    <location>
        <begin position="277"/>
        <end position="297"/>
    </location>
</feature>
<feature type="transmembrane region" description="Helical" evidence="1">
    <location>
        <begin position="299"/>
        <end position="319"/>
    </location>
</feature>
<feature type="transmembrane region" description="Helical" evidence="1">
    <location>
        <begin position="333"/>
        <end position="353"/>
    </location>
</feature>
<feature type="transmembrane region" description="Helical" evidence="1">
    <location>
        <begin position="365"/>
        <end position="385"/>
    </location>
</feature>
<dbReference type="EMBL" id="AE016827">
    <property type="protein sequence ID" value="AAU38186.1"/>
    <property type="molecule type" value="Genomic_DNA"/>
</dbReference>
<dbReference type="RefSeq" id="WP_011200750.1">
    <property type="nucleotide sequence ID" value="NC_006300.1"/>
</dbReference>
<dbReference type="SMR" id="Q65S74"/>
<dbReference type="STRING" id="221988.MS1579"/>
<dbReference type="KEGG" id="msu:MS1579"/>
<dbReference type="eggNOG" id="COG2814">
    <property type="taxonomic scope" value="Bacteria"/>
</dbReference>
<dbReference type="HOGENOM" id="CLU_001265_61_1_6"/>
<dbReference type="OrthoDB" id="9788453at2"/>
<dbReference type="Proteomes" id="UP000000607">
    <property type="component" value="Chromosome"/>
</dbReference>
<dbReference type="GO" id="GO:0005886">
    <property type="term" value="C:plasma membrane"/>
    <property type="evidence" value="ECO:0007669"/>
    <property type="project" value="UniProtKB-SubCell"/>
</dbReference>
<dbReference type="GO" id="GO:0015144">
    <property type="term" value="F:carbohydrate transmembrane transporter activity"/>
    <property type="evidence" value="ECO:0007669"/>
    <property type="project" value="UniProtKB-UniRule"/>
</dbReference>
<dbReference type="CDD" id="cd17324">
    <property type="entry name" value="MFS_NepI_like"/>
    <property type="match status" value="1"/>
</dbReference>
<dbReference type="Gene3D" id="1.20.1250.20">
    <property type="entry name" value="MFS general substrate transporter like domains"/>
    <property type="match status" value="1"/>
</dbReference>
<dbReference type="HAMAP" id="MF_00517">
    <property type="entry name" value="MFS_SotB"/>
    <property type="match status" value="1"/>
</dbReference>
<dbReference type="InterPro" id="IPR011701">
    <property type="entry name" value="MFS"/>
</dbReference>
<dbReference type="InterPro" id="IPR020846">
    <property type="entry name" value="MFS_dom"/>
</dbReference>
<dbReference type="InterPro" id="IPR050189">
    <property type="entry name" value="MFS_Efflux_Transporters"/>
</dbReference>
<dbReference type="InterPro" id="IPR036259">
    <property type="entry name" value="MFS_trans_sf"/>
</dbReference>
<dbReference type="InterPro" id="IPR023495">
    <property type="entry name" value="Sugar_effux_transptr_put"/>
</dbReference>
<dbReference type="NCBIfam" id="NF002921">
    <property type="entry name" value="PRK03545.1"/>
    <property type="match status" value="1"/>
</dbReference>
<dbReference type="PANTHER" id="PTHR43124">
    <property type="entry name" value="PURINE EFFLUX PUMP PBUE"/>
    <property type="match status" value="1"/>
</dbReference>
<dbReference type="PANTHER" id="PTHR43124:SF4">
    <property type="entry name" value="SUGAR EFFLUX TRANSPORTER"/>
    <property type="match status" value="1"/>
</dbReference>
<dbReference type="Pfam" id="PF07690">
    <property type="entry name" value="MFS_1"/>
    <property type="match status" value="1"/>
</dbReference>
<dbReference type="SUPFAM" id="SSF103473">
    <property type="entry name" value="MFS general substrate transporter"/>
    <property type="match status" value="1"/>
</dbReference>
<dbReference type="PROSITE" id="PS50850">
    <property type="entry name" value="MFS"/>
    <property type="match status" value="1"/>
</dbReference>
<comment type="function">
    <text evidence="1">Involved in the efflux of sugars. The physiological role may be the reduction of the intracellular concentration of toxic sugars or sugar metabolites.</text>
</comment>
<comment type="subcellular location">
    <subcellularLocation>
        <location evidence="1">Cell inner membrane</location>
        <topology evidence="1">Multi-pass membrane protein</topology>
    </subcellularLocation>
</comment>
<comment type="similarity">
    <text evidence="1">Belongs to the major facilitator superfamily. SotB (TC 2.A.1.2) family.</text>
</comment>
<keyword id="KW-0997">Cell inner membrane</keyword>
<keyword id="KW-1003">Cell membrane</keyword>
<keyword id="KW-0472">Membrane</keyword>
<keyword id="KW-0762">Sugar transport</keyword>
<keyword id="KW-0812">Transmembrane</keyword>
<keyword id="KW-1133">Transmembrane helix</keyword>
<keyword id="KW-0813">Transport</keyword>
<proteinExistence type="inferred from homology"/>
<protein>
    <recommendedName>
        <fullName evidence="1">Probable sugar efflux transporter</fullName>
    </recommendedName>
</protein>
<gene>
    <name evidence="1" type="primary">sotB</name>
    <name type="ordered locus">MS1579</name>
</gene>
<sequence>MLNRKLVNRVEYFRVIVMAFAAFVFNTTEFVPVALLSDIADSFQMPVSNTGLMITIYAWIVSLCSLPCMLMTARLERRRLLISLFILFIASHILSAFAWNYEVLLIARAGVALTHSIFWSITAALTIRIAPKNKKTQALGLLALGSSLAMVLGLPLGRIIGQAFGWRTTFTLIGVFAALILILIVRLLPKIPSQNAGSLKSLPVLARRPMLITLYIFTILVISAHFTAYSYIEPFMIQIGRVSANKATAVLLIFGVSGVVASVLFSRLYRIAPIKFLLSSVAILTLALICLYGVSGISGAIFALVFIWGVAISALSLAMQMKVLQLAPDATDVATAIYSGIYNIGIGGGALIGNQVMQHLGLANIGYVGAVLGAVSIIWFILMFLKFSRVPLNIVNQ</sequence>
<accession>Q65S74</accession>
<organism>
    <name type="scientific">Mannheimia succiniciproducens (strain KCTC 0769BP / MBEL55E)</name>
    <dbReference type="NCBI Taxonomy" id="221988"/>
    <lineage>
        <taxon>Bacteria</taxon>
        <taxon>Pseudomonadati</taxon>
        <taxon>Pseudomonadota</taxon>
        <taxon>Gammaproteobacteria</taxon>
        <taxon>Pasteurellales</taxon>
        <taxon>Pasteurellaceae</taxon>
        <taxon>Basfia</taxon>
    </lineage>
</organism>
<evidence type="ECO:0000255" key="1">
    <source>
        <dbReference type="HAMAP-Rule" id="MF_00517"/>
    </source>
</evidence>